<organism>
    <name type="scientific">Gallus gallus</name>
    <name type="common">Chicken</name>
    <dbReference type="NCBI Taxonomy" id="9031"/>
    <lineage>
        <taxon>Eukaryota</taxon>
        <taxon>Metazoa</taxon>
        <taxon>Chordata</taxon>
        <taxon>Craniata</taxon>
        <taxon>Vertebrata</taxon>
        <taxon>Euteleostomi</taxon>
        <taxon>Archelosauria</taxon>
        <taxon>Archosauria</taxon>
        <taxon>Dinosauria</taxon>
        <taxon>Saurischia</taxon>
        <taxon>Theropoda</taxon>
        <taxon>Coelurosauria</taxon>
        <taxon>Aves</taxon>
        <taxon>Neognathae</taxon>
        <taxon>Galloanserae</taxon>
        <taxon>Galliformes</taxon>
        <taxon>Phasianidae</taxon>
        <taxon>Phasianinae</taxon>
        <taxon>Gallus</taxon>
    </lineage>
</organism>
<keyword id="KW-1003">Cell membrane</keyword>
<keyword id="KW-0903">Direct protein sequencing</keyword>
<keyword id="KW-1015">Disulfide bond</keyword>
<keyword id="KW-0272">Extracellular matrix</keyword>
<keyword id="KW-0325">Glycoprotein</keyword>
<keyword id="KW-0336">GPI-anchor</keyword>
<keyword id="KW-1009">Hearing</keyword>
<keyword id="KW-0449">Lipoprotein</keyword>
<keyword id="KW-0472">Membrane</keyword>
<keyword id="KW-1185">Reference proteome</keyword>
<keyword id="KW-0677">Repeat</keyword>
<keyword id="KW-0964">Secreted</keyword>
<keyword id="KW-0732">Signal</keyword>
<comment type="function">
    <text evidence="8">One of the major non-collagenous components of the tectorial membrane. The tectorial membrane is an extracellular matrix of the inner ear that covers the neuroepithelium of the cochlea and contacts the stereocilia bundles of specialized sensory hair cells. Sound induces movement of these hair cells relative to the tectorial membrane, deflects the stereocilia and leads to fluctuations in hair-cell membrane potential, transducing sound into electrical signals.</text>
</comment>
<comment type="subunit">
    <text>May form homomeric filament after self-association or heteromeric filament after association with beta-tectorin.</text>
</comment>
<comment type="subcellular location">
    <subcellularLocation>
        <location evidence="10">Cell membrane</location>
        <topology evidence="10">Lipid-anchor</topology>
        <topology evidence="10">GPI-anchor</topology>
        <orientation evidence="10">Extracellular side</orientation>
    </subcellularLocation>
    <subcellularLocation>
        <location>Secreted</location>
        <location>Extracellular space</location>
        <location>Extracellular matrix</location>
    </subcellularLocation>
    <text evidence="1">Found in the non-collagenous matrix of the tectorial membrane.</text>
</comment>
<comment type="tissue specificity">
    <text evidence="7">Expressed in the inner ear.</text>
</comment>
<comment type="developmental stage">
    <text evidence="7">Apically located within the epithelium of the developing basilar papilla at days 5.5 dpc to 8 dpc. As development proceeds, expression becomes restricted to the basal layer. In the utricle, alpha-tectorin is first expressed at 4.5 dpc.</text>
</comment>
<comment type="domain">
    <text>Zona pellucida domain may enable to form filaments.</text>
</comment>
<comment type="PTM">
    <text>At least 3 products of tectorin seem to exist: HMM, MMM and LMM. They may be generated by active processing or the result of proteolysis occurring between intrachain disulfide bonds.</text>
</comment>
<comment type="PTM">
    <text>The presence of a hydrophobic C-terminus preceded by a potential cleavage site strongly suggests that tectorins are synthesized as glycosylphosphatidylinositol-linked, membrane-bound precursors. Tectorins are targeted to the apical surface of the inner ear epithelia by the lipid and proteolytically released into the extracellular compartment.</text>
</comment>
<evidence type="ECO:0000250" key="1"/>
<evidence type="ECO:0000250" key="2">
    <source>
        <dbReference type="UniProtKB" id="P07911"/>
    </source>
</evidence>
<evidence type="ECO:0000255" key="3"/>
<evidence type="ECO:0000255" key="4">
    <source>
        <dbReference type="PROSITE-ProRule" id="PRU00375"/>
    </source>
</evidence>
<evidence type="ECO:0000255" key="5">
    <source>
        <dbReference type="PROSITE-ProRule" id="PRU00570"/>
    </source>
</evidence>
<evidence type="ECO:0000255" key="6">
    <source>
        <dbReference type="PROSITE-ProRule" id="PRU00580"/>
    </source>
</evidence>
<evidence type="ECO:0000269" key="7">
    <source>
    </source>
</evidence>
<evidence type="ECO:0000269" key="8">
    <source>
    </source>
</evidence>
<evidence type="ECO:0000269" key="9">
    <source>
    </source>
</evidence>
<evidence type="ECO:0000305" key="10"/>
<sequence>MNTRSLLSAWAALLVVTVRHRAHAMASLYPFWPNDTKTPKVDDGSSSEIKLSVPFIFFRSPYRTVYVNNNGVISFNSLVSQFTPEAFPLADGRAFVAPFCGDVANGIRGEIYYRESTNPELLGESSKDIRKYFKDMASFSASWVFIVTWEEVQFYGGSSTTPVNTFQAVLITDGVSSFAIFNYQEISWTTGTASGGDPLTGLGGVMAQAGFNGGNISNFFSIPGSRTPDIVNIEQTTNVNIPGRWAFKIDGREIDPANLSLRGQFLHQGEIFWENSNCSTKCRCLDFNNEIFCQEMLAPFETVEPKIKFFQCVPVETACVVFGDPHYHTFDGFLFHFQGSCSYLLARQCWPGSQLPYFNVEAKNERGGSSVSWAEDIFVEVYRHKIVLPKGGFGKAKVDDLVVSLGAIKVYQSGLSTALETDFGLLVTYDGQHYASVSVPGTYINGTCGLCGNYNKDPEDDALRSDGRLASSVPELGESWRVPHPERKCSPGCVENCSVCDASRILYSPICGFSQECGAWSVLVATAFVHSCVYDLCSARRTHRLCQAIQVTLRCCQGLGIRWENGVPDGMRGGLAVPGHSHYSGCASGCPATCSDLTAPLRCTAPCPEGCECDDGHVLSARPLHSLCRSGCVVDGRSRCREVFWATADCTAECQCEDGGEAKCFNTSCPEGEVCTIEDGYRGCYPKREGLCSVGQNQVLRTFDGVTFPYPLEHSYTLLKTCMEKPDFIEVDISQKKPDTLPMAGRVVRIQVVGQEVKVGGASLSEVKVNGYDVDLPYFHPSGHLEIYRTDNGTVTESEGLLSIGYYDSGLLEIRLSTAYFNCTGGLCGFFNGNDSDEFCTPKAKCTDNLELFLESWTTFDEICNGECGDLLKACNNDSELLKTYRSRSNCAIINDPTNSSFLECHNVSIVSAYYRTCLFRLCQSGGNQSELCSAVARYASACKNSEVDVGQWRSHSFCPLACPENSHFEECMSCVETCETLATGCCMDTCTEGCQCDEGFALRSPCVPRGECGCNFEGHELATNQTFWMDISCHLLCYCNGSDNSVYCENVLQDDEYYCHVRTDASCIVSGYGHYLTFDGFSFDFQSSCALVLCTTIHGACERSDTFPTFTVTVTAKNEDRDTSLACVVKQVEVEVFNYYIVIHRAYKYTVMINNERLYLPLKLGQGKVNIFAFGFHIVVETDFGLKVVYDWKTFLSVTIPRSFQNLTYGLCGRYNGNPDDDLVAAGGTPRFGVTDFVQSWAKRDTFCRVGSGDRCPACGKVEGFWKPQQLCSLIPSQSGVFAKCHSKINPSYFYKNCLFDTVVDGGAMARRVADWLQNYASTCQTQGIAIIGWRNFTSCSVSCPPNSHYESCVSLCQPRCAAIRLKSDCGHYCVEGCQCDPGYVLNGKSCILPQNCGCYSDGKYYEPKQLFWNGDCTRRCARFRRNLIQCDPRHCKSDEECASRNGVRGCFSTRSSFCLAAGGGVFRTFDGAFLRFPANCAFVLSTICQRLADFSFQLIINFDKWSSPNLTIISVYIYINEEQILISDRSTVKVNGSLVSIPFVTGLSTKIYSQEGFLVIDSGPDIHIRYNGFNVIKITIGDRLQNKVCGLCGNFNGDPADDYATLRGKPVVSSVVLAQSWKTNGMQKSCNELQYSQYAASCDNVQIQKLQSDSYCLKLTDMKGFFQPCYGLLDPLPFYESCFLDGCYNRKQVQLCGSLAAYGEACRTFGILGTEWIEKENCSGVVEDPCAGADCPNRTCELDDGGELCGCIEPPPYGNTTHDIIDAEVTCKAAQMEVSISKCKLFQLGFEREGVRVNDRHCPGIEGEDFISFQINNTKGNCGNLVQSNSTHIVYKNTVWIESANNTGNIITRDRTINVEVFCAYELDIKISLDSVVRPMLSVINLTVPTQEGSFTTKMALYKNSSYKHPYRQGEVVLTTRDVLYVGVFVVGADSNHLILMLNKCYATPSRDSNDKLRYFIIEGGCQNLKDNTIGIEENGVSLTCRFHVTVFKFIGDYDEVHLHCAVSLCDSEKYSCKINCPQHRRSASAFAQEAHEQILSVGPIRRKRSDWCEDNGGCEQICTSQADGPLCSCVTGTLQGDGKSCMASSSSADIRAQASLLVAAQLWLWAALHDPTS</sequence>
<protein>
    <recommendedName>
        <fullName>Alpha-tectorin</fullName>
    </recommendedName>
</protein>
<name>TECTA_CHICK</name>
<proteinExistence type="evidence at protein level"/>
<gene>
    <name type="primary">TECTA</name>
</gene>
<accession>Q9YH85</accession>
<reference key="1">
    <citation type="journal article" date="1999" name="Hear. Res.">
        <title>Chick alpha-tectorin: molecular cloning and expression during embryogenesis.</title>
        <authorList>
            <person name="Coutinho P."/>
            <person name="Goodyear R."/>
            <person name="Legan P.K."/>
            <person name="Richardson G.P."/>
        </authorList>
    </citation>
    <scope>NUCLEOTIDE SEQUENCE [MRNA]</scope>
    <scope>TISSUE SPECIFICITY</scope>
    <scope>DEVELOPMENTAL STAGE</scope>
    <source>
        <tissue>Cochlear duct</tissue>
    </source>
</reference>
<reference key="2">
    <citation type="journal article" date="1997" name="J. Biol. Chem.">
        <title>The mouse tectorins. Modular matrix proteins of the inner ear homologous to components of the sperm-egg adhesion system.</title>
        <authorList>
            <person name="Legan P.K."/>
            <person name="Rau A."/>
            <person name="Keene J.N."/>
            <person name="Richardson G.P."/>
        </authorList>
    </citation>
    <scope>PROTEIN SEQUENCE OF 25-33; 325-334 AND 1105-1124</scope>
</reference>
<reference key="3">
    <citation type="journal article" date="1992" name="Hear. Res.">
        <title>The protein composition of the avian tectorial membrane.</title>
        <authorList>
            <person name="Killick R."/>
            <person name="Malenczak C."/>
            <person name="Richardson G.P."/>
        </authorList>
    </citation>
    <scope>FUNCTION</scope>
</reference>
<dbReference type="EMBL" id="AJ012287">
    <property type="protein sequence ID" value="CAA09979.1"/>
    <property type="molecule type" value="mRNA"/>
</dbReference>
<dbReference type="PIR" id="T30243">
    <property type="entry name" value="T30243"/>
</dbReference>
<dbReference type="SMR" id="Q9YH85"/>
<dbReference type="FunCoup" id="Q9YH85">
    <property type="interactions" value="7"/>
</dbReference>
<dbReference type="STRING" id="9031.ENSGALP00000072221"/>
<dbReference type="GlyCosmos" id="Q9YH85">
    <property type="glycosylation" value="28 sites, No reported glycans"/>
</dbReference>
<dbReference type="GlyGen" id="Q9YH85">
    <property type="glycosylation" value="29 sites"/>
</dbReference>
<dbReference type="PaxDb" id="9031-ENSGALP00000040065"/>
<dbReference type="VEuPathDB" id="HostDB:geneid_395686"/>
<dbReference type="eggNOG" id="KOG1216">
    <property type="taxonomic scope" value="Eukaryota"/>
</dbReference>
<dbReference type="eggNOG" id="KOG4291">
    <property type="taxonomic scope" value="Eukaryota"/>
</dbReference>
<dbReference type="InParanoid" id="Q9YH85"/>
<dbReference type="OrthoDB" id="5273213at2759"/>
<dbReference type="PhylomeDB" id="Q9YH85"/>
<dbReference type="Proteomes" id="UP000000539">
    <property type="component" value="Unassembled WGS sequence"/>
</dbReference>
<dbReference type="GO" id="GO:0031012">
    <property type="term" value="C:extracellular matrix"/>
    <property type="evidence" value="ECO:0000318"/>
    <property type="project" value="GO_Central"/>
</dbReference>
<dbReference type="GO" id="GO:0005576">
    <property type="term" value="C:extracellular region"/>
    <property type="evidence" value="ECO:0007669"/>
    <property type="project" value="UniProtKB-KW"/>
</dbReference>
<dbReference type="GO" id="GO:0005886">
    <property type="term" value="C:plasma membrane"/>
    <property type="evidence" value="ECO:0007669"/>
    <property type="project" value="UniProtKB-SubCell"/>
</dbReference>
<dbReference type="GO" id="GO:0098552">
    <property type="term" value="C:side of membrane"/>
    <property type="evidence" value="ECO:0007669"/>
    <property type="project" value="UniProtKB-KW"/>
</dbReference>
<dbReference type="GO" id="GO:0005201">
    <property type="term" value="F:extracellular matrix structural constituent"/>
    <property type="evidence" value="ECO:0000318"/>
    <property type="project" value="GO_Central"/>
</dbReference>
<dbReference type="GO" id="GO:0007160">
    <property type="term" value="P:cell-matrix adhesion"/>
    <property type="evidence" value="ECO:0007669"/>
    <property type="project" value="InterPro"/>
</dbReference>
<dbReference type="GO" id="GO:0007605">
    <property type="term" value="P:sensory perception of sound"/>
    <property type="evidence" value="ECO:0007669"/>
    <property type="project" value="UniProtKB-KW"/>
</dbReference>
<dbReference type="CDD" id="cd19941">
    <property type="entry name" value="TIL"/>
    <property type="match status" value="3"/>
</dbReference>
<dbReference type="FunFam" id="2.10.25.10:FF:000055">
    <property type="entry name" value="alpha-tectorin isoform X1"/>
    <property type="match status" value="1"/>
</dbReference>
<dbReference type="FunFam" id="2.60.40.4100:FF:000001">
    <property type="entry name" value="alpha-tectorin isoform X1"/>
    <property type="match status" value="1"/>
</dbReference>
<dbReference type="FunFam" id="2.60.40.3210:FF:000002">
    <property type="entry name" value="Tectorin alpha"/>
    <property type="match status" value="1"/>
</dbReference>
<dbReference type="Gene3D" id="2.10.25.10">
    <property type="entry name" value="Laminin"/>
    <property type="match status" value="4"/>
</dbReference>
<dbReference type="Gene3D" id="2.60.40.4100">
    <property type="entry name" value="Zona pellucida, ZP-C domain"/>
    <property type="match status" value="1"/>
</dbReference>
<dbReference type="Gene3D" id="2.60.40.3210">
    <property type="entry name" value="Zona pellucida, ZP-N domain"/>
    <property type="match status" value="1"/>
</dbReference>
<dbReference type="InterPro" id="IPR052749">
    <property type="entry name" value="Alpha-tectorin"/>
</dbReference>
<dbReference type="InterPro" id="IPR003886">
    <property type="entry name" value="NIDO_dom"/>
</dbReference>
<dbReference type="InterPro" id="IPR036084">
    <property type="entry name" value="Ser_inhib-like_sf"/>
</dbReference>
<dbReference type="InterPro" id="IPR002919">
    <property type="entry name" value="TIL_dom"/>
</dbReference>
<dbReference type="InterPro" id="IPR025615">
    <property type="entry name" value="TILa_dom"/>
</dbReference>
<dbReference type="InterPro" id="IPR014853">
    <property type="entry name" value="VWF/SSPO/ZAN-like_Cys-rich_dom"/>
</dbReference>
<dbReference type="InterPro" id="IPR001007">
    <property type="entry name" value="VWF_dom"/>
</dbReference>
<dbReference type="InterPro" id="IPR001846">
    <property type="entry name" value="VWF_type-D"/>
</dbReference>
<dbReference type="InterPro" id="IPR055355">
    <property type="entry name" value="ZP-C"/>
</dbReference>
<dbReference type="InterPro" id="IPR042235">
    <property type="entry name" value="ZP-C_dom"/>
</dbReference>
<dbReference type="InterPro" id="IPR001507">
    <property type="entry name" value="ZP_dom"/>
</dbReference>
<dbReference type="InterPro" id="IPR017977">
    <property type="entry name" value="ZP_dom_CS"/>
</dbReference>
<dbReference type="PANTHER" id="PTHR46160:SF3">
    <property type="entry name" value="ALPHA-TECTORIN"/>
    <property type="match status" value="1"/>
</dbReference>
<dbReference type="PANTHER" id="PTHR46160">
    <property type="entry name" value="ALPHA-TECTORIN-RELATED"/>
    <property type="match status" value="1"/>
</dbReference>
<dbReference type="Pfam" id="PF08742">
    <property type="entry name" value="C8"/>
    <property type="match status" value="3"/>
</dbReference>
<dbReference type="Pfam" id="PF06119">
    <property type="entry name" value="NIDO"/>
    <property type="match status" value="1"/>
</dbReference>
<dbReference type="Pfam" id="PF01826">
    <property type="entry name" value="TIL"/>
    <property type="match status" value="3"/>
</dbReference>
<dbReference type="Pfam" id="PF12714">
    <property type="entry name" value="TILa"/>
    <property type="match status" value="1"/>
</dbReference>
<dbReference type="Pfam" id="PF00094">
    <property type="entry name" value="VWD"/>
    <property type="match status" value="4"/>
</dbReference>
<dbReference type="Pfam" id="PF00100">
    <property type="entry name" value="Zona_pellucida"/>
    <property type="match status" value="1"/>
</dbReference>
<dbReference type="SMART" id="SM00832">
    <property type="entry name" value="C8"/>
    <property type="match status" value="3"/>
</dbReference>
<dbReference type="SMART" id="SM00539">
    <property type="entry name" value="NIDO"/>
    <property type="match status" value="1"/>
</dbReference>
<dbReference type="SMART" id="SM00215">
    <property type="entry name" value="VWC_out"/>
    <property type="match status" value="2"/>
</dbReference>
<dbReference type="SMART" id="SM00216">
    <property type="entry name" value="VWD"/>
    <property type="match status" value="4"/>
</dbReference>
<dbReference type="SMART" id="SM00241">
    <property type="entry name" value="ZP"/>
    <property type="match status" value="1"/>
</dbReference>
<dbReference type="SUPFAM" id="SSF57567">
    <property type="entry name" value="Serine protease inhibitors"/>
    <property type="match status" value="3"/>
</dbReference>
<dbReference type="PROSITE" id="PS51220">
    <property type="entry name" value="NIDO"/>
    <property type="match status" value="1"/>
</dbReference>
<dbReference type="PROSITE" id="PS51233">
    <property type="entry name" value="VWFD"/>
    <property type="match status" value="4"/>
</dbReference>
<dbReference type="PROSITE" id="PS00682">
    <property type="entry name" value="ZP_1"/>
    <property type="match status" value="1"/>
</dbReference>
<dbReference type="PROSITE" id="PS51034">
    <property type="entry name" value="ZP_2"/>
    <property type="match status" value="1"/>
</dbReference>
<feature type="signal peptide" evidence="9">
    <location>
        <begin position="1"/>
        <end position="24"/>
    </location>
</feature>
<feature type="chain" id="PRO_0000041739" description="Alpha-tectorin">
    <location>
        <begin position="25"/>
        <end position="2058"/>
    </location>
</feature>
<feature type="propeptide" id="PRO_0000041740" description="Removed in mature form" evidence="3">
    <location>
        <begin position="2059"/>
        <end position="2120"/>
    </location>
</feature>
<feature type="domain" description="NIDO" evidence="5">
    <location>
        <begin position="98"/>
        <end position="252"/>
    </location>
</feature>
<feature type="domain" description="VWFC">
    <location>
        <begin position="260"/>
        <end position="312"/>
    </location>
</feature>
<feature type="domain" description="VWFD 1" evidence="6">
    <location>
        <begin position="317"/>
        <end position="490"/>
    </location>
</feature>
<feature type="domain" description="TIL 1">
    <location>
        <begin position="578"/>
        <end position="620"/>
    </location>
</feature>
<feature type="domain" description="VWFD 2" evidence="6">
    <location>
        <begin position="690"/>
        <end position="865"/>
    </location>
</feature>
<feature type="domain" description="TIL 2">
    <location>
        <begin position="963"/>
        <end position="1013"/>
    </location>
</feature>
<feature type="domain" description="VWFD 3" evidence="6">
    <location>
        <begin position="1066"/>
        <end position="1250"/>
    </location>
</feature>
<feature type="domain" description="TIL 3">
    <location>
        <begin position="1345"/>
        <end position="1398"/>
    </location>
</feature>
<feature type="domain" description="VWFD 4" evidence="6">
    <location>
        <begin position="1458"/>
        <end position="1633"/>
    </location>
</feature>
<feature type="domain" description="ZP" evidence="4">
    <location>
        <begin position="1772"/>
        <end position="2026"/>
    </location>
</feature>
<feature type="lipid moiety-binding region" description="GPI-anchor amidated asparagine" evidence="3">
    <location>
        <position position="2058"/>
    </location>
</feature>
<feature type="glycosylation site" description="N-linked (GlcNAc...) asparagine" evidence="3">
    <location>
        <position position="34"/>
    </location>
</feature>
<feature type="glycosylation site" description="N-linked (GlcNAc...) asparagine" evidence="3">
    <location>
        <position position="215"/>
    </location>
</feature>
<feature type="glycosylation site" description="N-linked (GlcNAc...) asparagine" evidence="3">
    <location>
        <position position="258"/>
    </location>
</feature>
<feature type="glycosylation site" description="N-linked (GlcNAc...) asparagine" evidence="3">
    <location>
        <position position="277"/>
    </location>
</feature>
<feature type="glycosylation site" description="N-linked (GlcNAc...) asparagine" evidence="3">
    <location>
        <position position="445"/>
    </location>
</feature>
<feature type="glycosylation site" description="N-linked (GlcNAc...) asparagine" evidence="3">
    <location>
        <position position="496"/>
    </location>
</feature>
<feature type="glycosylation site" description="N-linked (GlcNAc...) asparagine" evidence="3">
    <location>
        <position position="666"/>
    </location>
</feature>
<feature type="glycosylation site" description="N-linked (GlcNAc...) asparagine" evidence="3">
    <location>
        <position position="792"/>
    </location>
</feature>
<feature type="glycosylation site" description="N-linked (GlcNAc...) asparagine" evidence="3">
    <location>
        <position position="822"/>
    </location>
</feature>
<feature type="glycosylation site" description="N-linked (GlcNAc...) asparagine" evidence="3">
    <location>
        <position position="834"/>
    </location>
</feature>
<feature type="glycosylation site" description="N-linked (GlcNAc...) asparagine" evidence="3">
    <location>
        <position position="877"/>
    </location>
</feature>
<feature type="glycosylation site" description="N-linked (GlcNAc...) asparagine" evidence="3">
    <location>
        <position position="899"/>
    </location>
</feature>
<feature type="glycosylation site" description="N-linked (GlcNAc...) asparagine" evidence="3">
    <location>
        <position position="907"/>
    </location>
</feature>
<feature type="glycosylation site" description="N-linked (GlcNAc...) asparagine" evidence="3">
    <location>
        <position position="928"/>
    </location>
</feature>
<feature type="glycosylation site" description="N-linked (GlcNAc...) asparagine" evidence="3">
    <location>
        <position position="1025"/>
    </location>
</feature>
<feature type="glycosylation site" description="N-linked (GlcNAc...) asparagine" evidence="3">
    <location>
        <position position="1041"/>
    </location>
</feature>
<feature type="glycosylation site" description="N-linked (GlcNAc...) asparagine" evidence="3">
    <location>
        <position position="1207"/>
    </location>
</feature>
<feature type="glycosylation site" description="N-linked (GlcNAc...) asparagine" evidence="3">
    <location>
        <position position="1337"/>
    </location>
</feature>
<feature type="glycosylation site" description="N-linked (GlcNAc...) asparagine" evidence="3">
    <location>
        <position position="1511"/>
    </location>
</feature>
<feature type="glycosylation site" description="N-linked (GlcNAc...) asparagine" evidence="3">
    <location>
        <position position="1537"/>
    </location>
</feature>
<feature type="glycosylation site" description="N-linked (GlcNAc...) asparagine" evidence="3">
    <location>
        <position position="1723"/>
    </location>
</feature>
<feature type="glycosylation site" description="N-linked (GlcNAc...) asparagine" evidence="3">
    <location>
        <position position="1739"/>
    </location>
</feature>
<feature type="glycosylation site" description="N-linked (GlcNAc...) asparagine" evidence="3">
    <location>
        <position position="1761"/>
    </location>
</feature>
<feature type="glycosylation site" description="N-linked (GlcNAc...) asparagine" evidence="3">
    <location>
        <position position="1818"/>
    </location>
</feature>
<feature type="glycosylation site" description="N-linked (GlcNAc...) asparagine" evidence="3">
    <location>
        <position position="1831"/>
    </location>
</feature>
<feature type="glycosylation site" description="N-linked (GlcNAc...) asparagine" evidence="3">
    <location>
        <position position="1847"/>
    </location>
</feature>
<feature type="glycosylation site" description="N-linked (GlcNAc...) asparagine" evidence="3">
    <location>
        <position position="1887"/>
    </location>
</feature>
<feature type="glycosylation site" description="N-linked (GlcNAc...) asparagine" evidence="3">
    <location>
        <position position="1906"/>
    </location>
</feature>
<feature type="disulfide bond" evidence="6">
    <location>
        <begin position="319"/>
        <end position="451"/>
    </location>
</feature>
<feature type="disulfide bond" evidence="6">
    <location>
        <begin position="341"/>
        <end position="489"/>
    </location>
</feature>
<feature type="disulfide bond" evidence="6">
    <location>
        <begin position="692"/>
        <end position="828"/>
    </location>
</feature>
<feature type="disulfide bond" evidence="6">
    <location>
        <begin position="1068"/>
        <end position="1213"/>
    </location>
</feature>
<feature type="disulfide bond" evidence="6">
    <location>
        <begin position="1090"/>
        <end position="1249"/>
    </location>
</feature>
<feature type="disulfide bond" evidence="6">
    <location>
        <begin position="1460"/>
        <end position="1594"/>
    </location>
</feature>
<feature type="disulfide bond" evidence="6">
    <location>
        <begin position="1482"/>
        <end position="1632"/>
    </location>
</feature>
<feature type="disulfide bond" evidence="2">
    <location>
        <begin position="1684"/>
        <end position="1742"/>
    </location>
</feature>
<feature type="disulfide bond" evidence="2">
    <location>
        <begin position="1708"/>
        <end position="1751"/>
    </location>
</feature>
<feature type="disulfide bond" evidence="2">
    <location>
        <begin position="1753"/>
        <end position="1785"/>
    </location>
</feature>
<feature type="disulfide bond" evidence="2">
    <location>
        <begin position="1773"/>
        <end position="1865"/>
    </location>
</feature>
<feature type="disulfide bond" evidence="2">
    <location>
        <begin position="1804"/>
        <end position="1824"/>
    </location>
</feature>
<feature type="disulfide bond" evidence="6">
    <location>
        <begin position="1947"/>
        <end position="2007"/>
    </location>
</feature>
<feature type="disulfide bond" evidence="2">
    <location>
        <begin position="1968"/>
        <end position="2023"/>
    </location>
</feature>
<feature type="disulfide bond" evidence="2">
    <location>
        <begin position="2012"/>
        <end position="2019"/>
    </location>
</feature>
<feature type="sequence conflict" description="In Ref. 2; AA sequence." evidence="10" ref="2">
    <location>
        <begin position="1114"/>
        <end position="1115"/>
    </location>
</feature>
<feature type="sequence conflict" description="In Ref. 2; AA sequence." evidence="10" ref="2">
    <location>
        <position position="1123"/>
    </location>
</feature>